<feature type="chain" id="PRO_1000023154" description="Thymidylate kinase">
    <location>
        <begin position="1"/>
        <end position="214"/>
    </location>
</feature>
<feature type="binding site" evidence="1">
    <location>
        <begin position="10"/>
        <end position="17"/>
    </location>
    <ligand>
        <name>ATP</name>
        <dbReference type="ChEBI" id="CHEBI:30616"/>
    </ligand>
</feature>
<protein>
    <recommendedName>
        <fullName evidence="1">Thymidylate kinase</fullName>
        <ecNumber evidence="1">2.7.4.9</ecNumber>
    </recommendedName>
    <alternativeName>
        <fullName evidence="1">dTMP kinase</fullName>
    </alternativeName>
</protein>
<sequence length="214" mass="23171">MSGLFITFEGGEGAGKSTQIALLASHLRNHGFDPVITREPGGSPGAEAIRHVILSGNAETYGPAMEALLFAAARADHVDQLIRPTLAEGRIVLCDRFIDSSRAYQGVTGNLDATYMAAIERIAIDGAMPDLTLVLDICAERGLSRAGKRRGSDTADRFEKEDIAVHEARRQAFLEIARQEPARCKVIDADRSQEKIADEIRSVVDTILTEKGLL</sequence>
<reference key="1">
    <citation type="journal article" date="2009" name="PLoS ONE">
        <title>Genome degradation in Brucella ovis corresponds with narrowing of its host range and tissue tropism.</title>
        <authorList>
            <person name="Tsolis R.M."/>
            <person name="Seshadri R."/>
            <person name="Santos R.L."/>
            <person name="Sangari F.J."/>
            <person name="Lobo J.M."/>
            <person name="de Jong M.F."/>
            <person name="Ren Q."/>
            <person name="Myers G."/>
            <person name="Brinkac L.M."/>
            <person name="Nelson W.C."/>
            <person name="Deboy R.T."/>
            <person name="Angiuoli S."/>
            <person name="Khouri H."/>
            <person name="Dimitrov G."/>
            <person name="Robinson J.R."/>
            <person name="Mulligan S."/>
            <person name="Walker R.L."/>
            <person name="Elzer P.E."/>
            <person name="Hassan K.A."/>
            <person name="Paulsen I.T."/>
        </authorList>
    </citation>
    <scope>NUCLEOTIDE SEQUENCE [LARGE SCALE GENOMIC DNA]</scope>
    <source>
        <strain>ATCC 25840 / 63/290 / NCTC 10512</strain>
    </source>
</reference>
<proteinExistence type="inferred from homology"/>
<dbReference type="EC" id="2.7.4.9" evidence="1"/>
<dbReference type="EMBL" id="CP000708">
    <property type="protein sequence ID" value="ABQ60215.1"/>
    <property type="molecule type" value="Genomic_DNA"/>
</dbReference>
<dbReference type="RefSeq" id="WP_002964110.1">
    <property type="nucleotide sequence ID" value="NC_009505.1"/>
</dbReference>
<dbReference type="SMR" id="A5VQD7"/>
<dbReference type="GeneID" id="97533737"/>
<dbReference type="KEGG" id="bov:BOV_0960"/>
<dbReference type="HOGENOM" id="CLU_049131_0_0_5"/>
<dbReference type="PhylomeDB" id="A5VQD7"/>
<dbReference type="Proteomes" id="UP000006383">
    <property type="component" value="Chromosome I"/>
</dbReference>
<dbReference type="GO" id="GO:0005829">
    <property type="term" value="C:cytosol"/>
    <property type="evidence" value="ECO:0007669"/>
    <property type="project" value="TreeGrafter"/>
</dbReference>
<dbReference type="GO" id="GO:0005524">
    <property type="term" value="F:ATP binding"/>
    <property type="evidence" value="ECO:0007669"/>
    <property type="project" value="UniProtKB-UniRule"/>
</dbReference>
<dbReference type="GO" id="GO:0004798">
    <property type="term" value="F:dTMP kinase activity"/>
    <property type="evidence" value="ECO:0007669"/>
    <property type="project" value="UniProtKB-UniRule"/>
</dbReference>
<dbReference type="GO" id="GO:0006233">
    <property type="term" value="P:dTDP biosynthetic process"/>
    <property type="evidence" value="ECO:0007669"/>
    <property type="project" value="InterPro"/>
</dbReference>
<dbReference type="GO" id="GO:0006235">
    <property type="term" value="P:dTTP biosynthetic process"/>
    <property type="evidence" value="ECO:0007669"/>
    <property type="project" value="UniProtKB-UniRule"/>
</dbReference>
<dbReference type="GO" id="GO:0006227">
    <property type="term" value="P:dUDP biosynthetic process"/>
    <property type="evidence" value="ECO:0007669"/>
    <property type="project" value="TreeGrafter"/>
</dbReference>
<dbReference type="CDD" id="cd01672">
    <property type="entry name" value="TMPK"/>
    <property type="match status" value="1"/>
</dbReference>
<dbReference type="FunFam" id="3.40.50.300:FF:000225">
    <property type="entry name" value="Thymidylate kinase"/>
    <property type="match status" value="1"/>
</dbReference>
<dbReference type="Gene3D" id="3.40.50.300">
    <property type="entry name" value="P-loop containing nucleotide triphosphate hydrolases"/>
    <property type="match status" value="1"/>
</dbReference>
<dbReference type="HAMAP" id="MF_00165">
    <property type="entry name" value="Thymidylate_kinase"/>
    <property type="match status" value="1"/>
</dbReference>
<dbReference type="InterPro" id="IPR027417">
    <property type="entry name" value="P-loop_NTPase"/>
</dbReference>
<dbReference type="InterPro" id="IPR039430">
    <property type="entry name" value="Thymidylate_kin-like_dom"/>
</dbReference>
<dbReference type="InterPro" id="IPR018095">
    <property type="entry name" value="Thymidylate_kin_CS"/>
</dbReference>
<dbReference type="InterPro" id="IPR018094">
    <property type="entry name" value="Thymidylate_kinase"/>
</dbReference>
<dbReference type="NCBIfam" id="TIGR00041">
    <property type="entry name" value="DTMP_kinase"/>
    <property type="match status" value="1"/>
</dbReference>
<dbReference type="PANTHER" id="PTHR10344">
    <property type="entry name" value="THYMIDYLATE KINASE"/>
    <property type="match status" value="1"/>
</dbReference>
<dbReference type="PANTHER" id="PTHR10344:SF4">
    <property type="entry name" value="UMP-CMP KINASE 2, MITOCHONDRIAL"/>
    <property type="match status" value="1"/>
</dbReference>
<dbReference type="Pfam" id="PF02223">
    <property type="entry name" value="Thymidylate_kin"/>
    <property type="match status" value="1"/>
</dbReference>
<dbReference type="SUPFAM" id="SSF52540">
    <property type="entry name" value="P-loop containing nucleoside triphosphate hydrolases"/>
    <property type="match status" value="1"/>
</dbReference>
<dbReference type="PROSITE" id="PS01331">
    <property type="entry name" value="THYMIDYLATE_KINASE"/>
    <property type="match status" value="1"/>
</dbReference>
<comment type="function">
    <text evidence="1">Phosphorylation of dTMP to form dTDP in both de novo and salvage pathways of dTTP synthesis.</text>
</comment>
<comment type="catalytic activity">
    <reaction evidence="1">
        <text>dTMP + ATP = dTDP + ADP</text>
        <dbReference type="Rhea" id="RHEA:13517"/>
        <dbReference type="ChEBI" id="CHEBI:30616"/>
        <dbReference type="ChEBI" id="CHEBI:58369"/>
        <dbReference type="ChEBI" id="CHEBI:63528"/>
        <dbReference type="ChEBI" id="CHEBI:456216"/>
        <dbReference type="EC" id="2.7.4.9"/>
    </reaction>
</comment>
<comment type="similarity">
    <text evidence="1">Belongs to the thymidylate kinase family.</text>
</comment>
<accession>A5VQD7</accession>
<name>KTHY_BRUO2</name>
<evidence type="ECO:0000255" key="1">
    <source>
        <dbReference type="HAMAP-Rule" id="MF_00165"/>
    </source>
</evidence>
<organism>
    <name type="scientific">Brucella ovis (strain ATCC 25840 / 63/290 / NCTC 10512)</name>
    <dbReference type="NCBI Taxonomy" id="444178"/>
    <lineage>
        <taxon>Bacteria</taxon>
        <taxon>Pseudomonadati</taxon>
        <taxon>Pseudomonadota</taxon>
        <taxon>Alphaproteobacteria</taxon>
        <taxon>Hyphomicrobiales</taxon>
        <taxon>Brucellaceae</taxon>
        <taxon>Brucella/Ochrobactrum group</taxon>
        <taxon>Brucella</taxon>
    </lineage>
</organism>
<keyword id="KW-0067">ATP-binding</keyword>
<keyword id="KW-0418">Kinase</keyword>
<keyword id="KW-0545">Nucleotide biosynthesis</keyword>
<keyword id="KW-0547">Nucleotide-binding</keyword>
<keyword id="KW-0808">Transferase</keyword>
<gene>
    <name evidence="1" type="primary">tmk</name>
    <name type="ordered locus">BOV_0960</name>
</gene>